<sequence length="418" mass="47845">MKVLDELRDLVEDAIKGSTVFEKSKVLTPDYIPKNLPHREKQIKELSINFREILSNPGSTSVRVVISGKTGTGKTVTTKKFGELFSEIAKEKGLRVVYTHINCHRQRTLYLMLVEIANQLNLQIPNRGLSSQETFKLIYDYLEKRNIQLIITLDEFDYFVSTSPVEDIYFLVRIYDELNALVKRIHYIFILRELTSLASLDKSIKDHVIKNVIEFPPYTSEELYDILMDRIVNEKAFREGAVLEETVRFISDIYGIDKGGSGNARLALETLELAGKIADTEGSLLVTIDHAKKANSKINPELSIILDTIRDLDLHQLLVVKAIMNLHKKEGDDFFSMGKVEEEYNIVAKDLGEIPRKHTQVFEYIRKLKLMGLITARQSGKGMRGRTTLISLSVPISEELDNLINNEIRDRLLQQKNY</sequence>
<gene>
    <name type="primary">cdc6-2</name>
    <name type="ordered locus">STK_04710</name>
</gene>
<evidence type="ECO:0000255" key="1">
    <source>
        <dbReference type="HAMAP-Rule" id="MF_01407"/>
    </source>
</evidence>
<name>CDC62_SULTO</name>
<keyword id="KW-0067">ATP-binding</keyword>
<keyword id="KW-0235">DNA replication</keyword>
<keyword id="KW-0547">Nucleotide-binding</keyword>
<keyword id="KW-1185">Reference proteome</keyword>
<organism>
    <name type="scientific">Sulfurisphaera tokodaii (strain DSM 16993 / JCM 10545 / NBRC 100140 / 7)</name>
    <name type="common">Sulfolobus tokodaii</name>
    <dbReference type="NCBI Taxonomy" id="273063"/>
    <lineage>
        <taxon>Archaea</taxon>
        <taxon>Thermoproteota</taxon>
        <taxon>Thermoprotei</taxon>
        <taxon>Sulfolobales</taxon>
        <taxon>Sulfolobaceae</taxon>
        <taxon>Sulfurisphaera</taxon>
    </lineage>
</organism>
<comment type="function">
    <text evidence="1">Involved in regulation of DNA replication.</text>
</comment>
<comment type="similarity">
    <text evidence="1">Belongs to the CDC6/cdc18 family.</text>
</comment>
<accession>Q975D6</accession>
<feature type="chain" id="PRO_0000151022" description="ORC1-type DNA replication protein 2">
    <location>
        <begin position="1"/>
        <end position="418"/>
    </location>
</feature>
<feature type="binding site" evidence="1">
    <location>
        <begin position="72"/>
        <end position="76"/>
    </location>
    <ligand>
        <name>ATP</name>
        <dbReference type="ChEBI" id="CHEBI:30616"/>
    </ligand>
</feature>
<feature type="binding site" evidence="1">
    <location>
        <position position="218"/>
    </location>
    <ligand>
        <name>ATP</name>
        <dbReference type="ChEBI" id="CHEBI:30616"/>
    </ligand>
</feature>
<feature type="binding site" evidence="1">
    <location>
        <position position="230"/>
    </location>
    <ligand>
        <name>ATP</name>
        <dbReference type="ChEBI" id="CHEBI:30616"/>
    </ligand>
</feature>
<reference key="1">
    <citation type="journal article" date="2001" name="DNA Res.">
        <title>Complete genome sequence of an aerobic thermoacidophilic Crenarchaeon, Sulfolobus tokodaii strain7.</title>
        <authorList>
            <person name="Kawarabayasi Y."/>
            <person name="Hino Y."/>
            <person name="Horikawa H."/>
            <person name="Jin-no K."/>
            <person name="Takahashi M."/>
            <person name="Sekine M."/>
            <person name="Baba S."/>
            <person name="Ankai A."/>
            <person name="Kosugi H."/>
            <person name="Hosoyama A."/>
            <person name="Fukui S."/>
            <person name="Nagai Y."/>
            <person name="Nishijima K."/>
            <person name="Otsuka R."/>
            <person name="Nakazawa H."/>
            <person name="Takamiya M."/>
            <person name="Kato Y."/>
            <person name="Yoshizawa T."/>
            <person name="Tanaka T."/>
            <person name="Kudoh Y."/>
            <person name="Yamazaki J."/>
            <person name="Kushida N."/>
            <person name="Oguchi A."/>
            <person name="Aoki K."/>
            <person name="Masuda S."/>
            <person name="Yanagii M."/>
            <person name="Nishimura M."/>
            <person name="Yamagishi A."/>
            <person name="Oshima T."/>
            <person name="Kikuchi H."/>
        </authorList>
    </citation>
    <scope>NUCLEOTIDE SEQUENCE [LARGE SCALE GENOMIC DNA]</scope>
    <source>
        <strain>DSM 16993 / JCM 10545 / NBRC 100140 / 7</strain>
    </source>
</reference>
<dbReference type="EMBL" id="BA000023">
    <property type="protein sequence ID" value="BAB65465.1"/>
    <property type="molecule type" value="Genomic_DNA"/>
</dbReference>
<dbReference type="SMR" id="Q975D6"/>
<dbReference type="STRING" id="273063.STK_04710"/>
<dbReference type="KEGG" id="sto:STK_04710"/>
<dbReference type="PATRIC" id="fig|273063.9.peg.546"/>
<dbReference type="eggNOG" id="arCOG00467">
    <property type="taxonomic scope" value="Archaea"/>
</dbReference>
<dbReference type="Proteomes" id="UP000001015">
    <property type="component" value="Chromosome"/>
</dbReference>
<dbReference type="GO" id="GO:0005524">
    <property type="term" value="F:ATP binding"/>
    <property type="evidence" value="ECO:0007669"/>
    <property type="project" value="UniProtKB-UniRule"/>
</dbReference>
<dbReference type="GO" id="GO:0016887">
    <property type="term" value="F:ATP hydrolysis activity"/>
    <property type="evidence" value="ECO:0007669"/>
    <property type="project" value="InterPro"/>
</dbReference>
<dbReference type="GO" id="GO:0006260">
    <property type="term" value="P:DNA replication"/>
    <property type="evidence" value="ECO:0007669"/>
    <property type="project" value="UniProtKB-UniRule"/>
</dbReference>
<dbReference type="CDD" id="cd08768">
    <property type="entry name" value="Cdc6_C"/>
    <property type="match status" value="1"/>
</dbReference>
<dbReference type="Gene3D" id="1.10.8.60">
    <property type="match status" value="1"/>
</dbReference>
<dbReference type="Gene3D" id="3.40.50.300">
    <property type="entry name" value="P-loop containing nucleotide triphosphate hydrolases"/>
    <property type="match status" value="1"/>
</dbReference>
<dbReference type="Gene3D" id="1.10.10.10">
    <property type="entry name" value="Winged helix-like DNA-binding domain superfamily/Winged helix DNA-binding domain"/>
    <property type="match status" value="1"/>
</dbReference>
<dbReference type="HAMAP" id="MF_01407">
    <property type="entry name" value="ORC1_type_DNA_replic_protein"/>
    <property type="match status" value="1"/>
</dbReference>
<dbReference type="InterPro" id="IPR049945">
    <property type="entry name" value="AAA_22"/>
</dbReference>
<dbReference type="InterPro" id="IPR015163">
    <property type="entry name" value="Cdc6_C"/>
</dbReference>
<dbReference type="InterPro" id="IPR055237">
    <property type="entry name" value="Cdc6_lid"/>
</dbReference>
<dbReference type="InterPro" id="IPR050311">
    <property type="entry name" value="ORC1/CDC6"/>
</dbReference>
<dbReference type="InterPro" id="IPR014277">
    <property type="entry name" value="Orc1/Cdc6_arc"/>
</dbReference>
<dbReference type="InterPro" id="IPR027417">
    <property type="entry name" value="P-loop_NTPase"/>
</dbReference>
<dbReference type="InterPro" id="IPR036388">
    <property type="entry name" value="WH-like_DNA-bd_sf"/>
</dbReference>
<dbReference type="InterPro" id="IPR036390">
    <property type="entry name" value="WH_DNA-bd_sf"/>
</dbReference>
<dbReference type="NCBIfam" id="TIGR02928">
    <property type="entry name" value="orc1/cdc6 family replication initiation protein"/>
    <property type="match status" value="1"/>
</dbReference>
<dbReference type="NCBIfam" id="NF001623">
    <property type="entry name" value="PRK00411.1-1"/>
    <property type="match status" value="1"/>
</dbReference>
<dbReference type="PANTHER" id="PTHR10763">
    <property type="entry name" value="CELL DIVISION CONTROL PROTEIN 6-RELATED"/>
    <property type="match status" value="1"/>
</dbReference>
<dbReference type="PANTHER" id="PTHR10763:SF31">
    <property type="entry name" value="ORC1-TYPE DNA REPLICATION PROTEIN 2"/>
    <property type="match status" value="1"/>
</dbReference>
<dbReference type="Pfam" id="PF13401">
    <property type="entry name" value="AAA_22"/>
    <property type="match status" value="1"/>
</dbReference>
<dbReference type="Pfam" id="PF09079">
    <property type="entry name" value="Cdc6_C"/>
    <property type="match status" value="1"/>
</dbReference>
<dbReference type="Pfam" id="PF22703">
    <property type="entry name" value="Cdc6_lid"/>
    <property type="match status" value="1"/>
</dbReference>
<dbReference type="SMART" id="SM01074">
    <property type="entry name" value="Cdc6_C"/>
    <property type="match status" value="1"/>
</dbReference>
<dbReference type="SUPFAM" id="SSF52540">
    <property type="entry name" value="P-loop containing nucleoside triphosphate hydrolases"/>
    <property type="match status" value="1"/>
</dbReference>
<dbReference type="SUPFAM" id="SSF46785">
    <property type="entry name" value="Winged helix' DNA-binding domain"/>
    <property type="match status" value="1"/>
</dbReference>
<proteinExistence type="inferred from homology"/>
<protein>
    <recommendedName>
        <fullName evidence="1">ORC1-type DNA replication protein 2</fullName>
    </recommendedName>
</protein>